<accession>Q9NGW9</accession>
<accession>Q54FP0</accession>
<protein>
    <recommendedName>
        <fullName evidence="8">Probable serine/threonine-protein kinase mkcB</fullName>
        <ecNumber>2.7.11.1</ecNumber>
    </recommendedName>
    <alternativeName>
        <fullName>MAP kinase cascade B</fullName>
    </alternativeName>
</protein>
<name>MKCB_DICDI</name>
<keyword id="KW-0067">ATP-binding</keyword>
<keyword id="KW-0418">Kinase</keyword>
<keyword id="KW-0460">Magnesium</keyword>
<keyword id="KW-0479">Metal-binding</keyword>
<keyword id="KW-0547">Nucleotide-binding</keyword>
<keyword id="KW-1185">Reference proteome</keyword>
<keyword id="KW-0723">Serine/threonine-protein kinase</keyword>
<keyword id="KW-0808">Transferase</keyword>
<sequence length="714" mass="78925">MKSILKKAKHFFHTNETVNGENGGEKTAKESESQQHHQQQQQHDENGANPPDQGVDEASNVSQSQPTTSALQTSTSLQPSSSLHQIPQSQSSLELTTNPTQQLPTTPTKQLPTPPPPQQPHSQQQQQQQQQSQSQLNNNDISISTNTNNTTNNTNNNNNIDSTLTTPVPSSENLATLSTSTTSEQQPNSQPTPNNTNTTTSPPPSSASTSNLSTSTTTTTTTTTTTTAAANENTNTTQEQTVSPNKPPQPPNALSQSTTSSSTSSTSLLSSTFSKFKIKLGSGSTKNKDSSSAPGTPHINNNNNTVSSSNKNRSTLVITPGSVNNNNNNQNNHKNNNTTPDHPPEEQKPVEKEVITIATLADFPEDCQKLIRISGIPEEKLIKNIQILAYVLHFRTGRFFKLVDEPPREPRKKFVSERFNDGEKLLEPVEPALLKKMYKDSDQVGKGGFGTVYFAKSTKEKRLVAIKKMPHVTKRQQQQNFREAAILAKCDHPNIVKLHTCHIDKDSNLWIVMEFMEGGTFEEAAKAWKFNENNLAYVAKELLKGLQYLHENHMVHRDLKSANIMMSVEGKVKLIDFGLCEDVATSTPMHMVGSPFWMAPEMIQQKYHSTPVDIWSFAISLLEMANQRPPMMESAVKAMFTVATDGATGFDDPALWSDCFKDFLSLCLKQDPAERATAEELLKHPFIKKADSRDNMENILKKIFLTNSLMNSGF</sequence>
<proteinExistence type="evidence at transcript level"/>
<reference evidence="7 8" key="1">
    <citation type="journal article" date="2001" name="Mol. Biol. Cell">
        <title>Expression patterns of cell-type-specific genes in Dictyostelium.</title>
        <authorList>
            <person name="Iranfar N."/>
            <person name="Fuller D."/>
            <person name="Sasik R."/>
            <person name="Hwa T."/>
            <person name="Laub M."/>
            <person name="Loomis W.F."/>
        </authorList>
    </citation>
    <scope>NUCLEOTIDE SEQUENCE [GENOMIC DNA]</scope>
    <scope>TISSUE SPECIFICITY</scope>
    <source>
        <strain evidence="8">NC-4</strain>
    </source>
</reference>
<reference evidence="9" key="2">
    <citation type="journal article" date="2005" name="Nature">
        <title>The genome of the social amoeba Dictyostelium discoideum.</title>
        <authorList>
            <person name="Eichinger L."/>
            <person name="Pachebat J.A."/>
            <person name="Gloeckner G."/>
            <person name="Rajandream M.A."/>
            <person name="Sucgang R."/>
            <person name="Berriman M."/>
            <person name="Song J."/>
            <person name="Olsen R."/>
            <person name="Szafranski K."/>
            <person name="Xu Q."/>
            <person name="Tunggal B."/>
            <person name="Kummerfeld S."/>
            <person name="Madera M."/>
            <person name="Konfortov B.A."/>
            <person name="Rivero F."/>
            <person name="Bankier A.T."/>
            <person name="Lehmann R."/>
            <person name="Hamlin N."/>
            <person name="Davies R."/>
            <person name="Gaudet P."/>
            <person name="Fey P."/>
            <person name="Pilcher K."/>
            <person name="Chen G."/>
            <person name="Saunders D."/>
            <person name="Sodergren E.J."/>
            <person name="Davis P."/>
            <person name="Kerhornou A."/>
            <person name="Nie X."/>
            <person name="Hall N."/>
            <person name="Anjard C."/>
            <person name="Hemphill L."/>
            <person name="Bason N."/>
            <person name="Farbrother P."/>
            <person name="Desany B."/>
            <person name="Just E."/>
            <person name="Morio T."/>
            <person name="Rost R."/>
            <person name="Churcher C.M."/>
            <person name="Cooper J."/>
            <person name="Haydock S."/>
            <person name="van Driessche N."/>
            <person name="Cronin A."/>
            <person name="Goodhead I."/>
            <person name="Muzny D.M."/>
            <person name="Mourier T."/>
            <person name="Pain A."/>
            <person name="Lu M."/>
            <person name="Harper D."/>
            <person name="Lindsay R."/>
            <person name="Hauser H."/>
            <person name="James K.D."/>
            <person name="Quiles M."/>
            <person name="Madan Babu M."/>
            <person name="Saito T."/>
            <person name="Buchrieser C."/>
            <person name="Wardroper A."/>
            <person name="Felder M."/>
            <person name="Thangavelu M."/>
            <person name="Johnson D."/>
            <person name="Knights A."/>
            <person name="Loulseged H."/>
            <person name="Mungall K.L."/>
            <person name="Oliver K."/>
            <person name="Price C."/>
            <person name="Quail M.A."/>
            <person name="Urushihara H."/>
            <person name="Hernandez J."/>
            <person name="Rabbinowitsch E."/>
            <person name="Steffen D."/>
            <person name="Sanders M."/>
            <person name="Ma J."/>
            <person name="Kohara Y."/>
            <person name="Sharp S."/>
            <person name="Simmonds M.N."/>
            <person name="Spiegler S."/>
            <person name="Tivey A."/>
            <person name="Sugano S."/>
            <person name="White B."/>
            <person name="Walker D."/>
            <person name="Woodward J.R."/>
            <person name="Winckler T."/>
            <person name="Tanaka Y."/>
            <person name="Shaulsky G."/>
            <person name="Schleicher M."/>
            <person name="Weinstock G.M."/>
            <person name="Rosenthal A."/>
            <person name="Cox E.C."/>
            <person name="Chisholm R.L."/>
            <person name="Gibbs R.A."/>
            <person name="Loomis W.F."/>
            <person name="Platzer M."/>
            <person name="Kay R.R."/>
            <person name="Williams J.G."/>
            <person name="Dear P.H."/>
            <person name="Noegel A.A."/>
            <person name="Barrell B.G."/>
            <person name="Kuspa A."/>
        </authorList>
    </citation>
    <scope>NUCLEOTIDE SEQUENCE [LARGE SCALE GENOMIC DNA]</scope>
    <source>
        <strain evidence="9">AX4</strain>
    </source>
</reference>
<evidence type="ECO:0000250" key="1">
    <source>
        <dbReference type="UniProtKB" id="P28523"/>
    </source>
</evidence>
<evidence type="ECO:0000250" key="2">
    <source>
        <dbReference type="UniProtKB" id="Q869N2"/>
    </source>
</evidence>
<evidence type="ECO:0000255" key="3">
    <source>
        <dbReference type="PROSITE-ProRule" id="PRU00159"/>
    </source>
</evidence>
<evidence type="ECO:0000255" key="4">
    <source>
        <dbReference type="PROSITE-ProRule" id="PRU10027"/>
    </source>
</evidence>
<evidence type="ECO:0000256" key="5">
    <source>
        <dbReference type="SAM" id="MobiDB-lite"/>
    </source>
</evidence>
<evidence type="ECO:0000269" key="6">
    <source>
    </source>
</evidence>
<evidence type="ECO:0000305" key="7"/>
<evidence type="ECO:0000312" key="8">
    <source>
        <dbReference type="EMBL" id="AAF65408.1"/>
    </source>
</evidence>
<evidence type="ECO:0000312" key="9">
    <source>
        <dbReference type="EMBL" id="EAL62067.1"/>
    </source>
</evidence>
<gene>
    <name evidence="8" type="primary">mkcB</name>
    <name type="synonym">DG1101</name>
    <name type="ORF">DDB_G0290723</name>
</gene>
<dbReference type="EC" id="2.7.11.1"/>
<dbReference type="EMBL" id="AF238312">
    <property type="protein sequence ID" value="AAF65408.1"/>
    <property type="molecule type" value="Genomic_DNA"/>
</dbReference>
<dbReference type="EMBL" id="AAFI02000169">
    <property type="protein sequence ID" value="EAL62067.1"/>
    <property type="molecule type" value="Genomic_DNA"/>
</dbReference>
<dbReference type="RefSeq" id="XP_635572.1">
    <property type="nucleotide sequence ID" value="XM_630480.1"/>
</dbReference>
<dbReference type="SMR" id="Q9NGW9"/>
<dbReference type="FunCoup" id="Q9NGW9">
    <property type="interactions" value="483"/>
</dbReference>
<dbReference type="PaxDb" id="44689-DDB0191334"/>
<dbReference type="EnsemblProtists" id="EAL62067">
    <property type="protein sequence ID" value="EAL62067"/>
    <property type="gene ID" value="DDB_G0290723"/>
</dbReference>
<dbReference type="GeneID" id="8627796"/>
<dbReference type="KEGG" id="ddi:DDB_G0290723"/>
<dbReference type="dictyBase" id="DDB_G0290723">
    <property type="gene designation" value="mkcB"/>
</dbReference>
<dbReference type="VEuPathDB" id="AmoebaDB:DDB_G0290723"/>
<dbReference type="eggNOG" id="KOG0578">
    <property type="taxonomic scope" value="Eukaryota"/>
</dbReference>
<dbReference type="HOGENOM" id="CLU_387062_0_0_1"/>
<dbReference type="InParanoid" id="Q9NGW9"/>
<dbReference type="OMA" id="HTCHIDK"/>
<dbReference type="Reactome" id="R-DDI-383280">
    <property type="pathway name" value="Nuclear Receptor transcription pathway"/>
</dbReference>
<dbReference type="PRO" id="PR:Q9NGW9"/>
<dbReference type="Proteomes" id="UP000002195">
    <property type="component" value="Chromosome 5"/>
</dbReference>
<dbReference type="GO" id="GO:0005737">
    <property type="term" value="C:cytoplasm"/>
    <property type="evidence" value="ECO:0000318"/>
    <property type="project" value="GO_Central"/>
</dbReference>
<dbReference type="GO" id="GO:0005524">
    <property type="term" value="F:ATP binding"/>
    <property type="evidence" value="ECO:0007669"/>
    <property type="project" value="UniProtKB-KW"/>
</dbReference>
<dbReference type="GO" id="GO:0046872">
    <property type="term" value="F:metal ion binding"/>
    <property type="evidence" value="ECO:0007669"/>
    <property type="project" value="UniProtKB-KW"/>
</dbReference>
<dbReference type="GO" id="GO:0106310">
    <property type="term" value="F:protein serine kinase activity"/>
    <property type="evidence" value="ECO:0007669"/>
    <property type="project" value="RHEA"/>
</dbReference>
<dbReference type="GO" id="GO:0004674">
    <property type="term" value="F:protein serine/threonine kinase activity"/>
    <property type="evidence" value="ECO:0000318"/>
    <property type="project" value="GO_Central"/>
</dbReference>
<dbReference type="CDD" id="cd05122">
    <property type="entry name" value="PKc_STE"/>
    <property type="match status" value="1"/>
</dbReference>
<dbReference type="FunFam" id="1.10.510.10:FF:001158">
    <property type="entry name" value="Probable serine/threonine-protein kinase mkcE"/>
    <property type="match status" value="1"/>
</dbReference>
<dbReference type="Gene3D" id="1.10.510.10">
    <property type="entry name" value="Transferase(Phosphotransferase) domain 1"/>
    <property type="match status" value="1"/>
</dbReference>
<dbReference type="InterPro" id="IPR011009">
    <property type="entry name" value="Kinase-like_dom_sf"/>
</dbReference>
<dbReference type="InterPro" id="IPR000719">
    <property type="entry name" value="Prot_kinase_dom"/>
</dbReference>
<dbReference type="InterPro" id="IPR017441">
    <property type="entry name" value="Protein_kinase_ATP_BS"/>
</dbReference>
<dbReference type="InterPro" id="IPR008271">
    <property type="entry name" value="Ser/Thr_kinase_AS"/>
</dbReference>
<dbReference type="InterPro" id="IPR050629">
    <property type="entry name" value="STE20/SPS1-PAK"/>
</dbReference>
<dbReference type="PANTHER" id="PTHR48012:SF10">
    <property type="entry name" value="FI20177P1"/>
    <property type="match status" value="1"/>
</dbReference>
<dbReference type="PANTHER" id="PTHR48012">
    <property type="entry name" value="STERILE20-LIKE KINASE, ISOFORM B-RELATED"/>
    <property type="match status" value="1"/>
</dbReference>
<dbReference type="Pfam" id="PF00069">
    <property type="entry name" value="Pkinase"/>
    <property type="match status" value="1"/>
</dbReference>
<dbReference type="SMART" id="SM00220">
    <property type="entry name" value="S_TKc"/>
    <property type="match status" value="1"/>
</dbReference>
<dbReference type="SUPFAM" id="SSF56112">
    <property type="entry name" value="Protein kinase-like (PK-like)"/>
    <property type="match status" value="1"/>
</dbReference>
<dbReference type="PROSITE" id="PS00107">
    <property type="entry name" value="PROTEIN_KINASE_ATP"/>
    <property type="match status" value="1"/>
</dbReference>
<dbReference type="PROSITE" id="PS50011">
    <property type="entry name" value="PROTEIN_KINASE_DOM"/>
    <property type="match status" value="1"/>
</dbReference>
<dbReference type="PROSITE" id="PS00108">
    <property type="entry name" value="PROTEIN_KINASE_ST"/>
    <property type="match status" value="1"/>
</dbReference>
<feature type="chain" id="PRO_0000381740" description="Probable serine/threonine-protein kinase mkcB">
    <location>
        <begin position="1"/>
        <end position="714"/>
    </location>
</feature>
<feature type="domain" description="Protein kinase" evidence="3">
    <location>
        <begin position="438"/>
        <end position="687"/>
    </location>
</feature>
<feature type="region of interest" description="Disordered" evidence="5">
    <location>
        <begin position="1"/>
        <end position="267"/>
    </location>
</feature>
<feature type="region of interest" description="Disordered" evidence="5">
    <location>
        <begin position="281"/>
        <end position="349"/>
    </location>
</feature>
<feature type="compositionally biased region" description="Basic residues" evidence="5">
    <location>
        <begin position="1"/>
        <end position="12"/>
    </location>
</feature>
<feature type="compositionally biased region" description="Basic and acidic residues" evidence="5">
    <location>
        <begin position="23"/>
        <end position="35"/>
    </location>
</feature>
<feature type="compositionally biased region" description="Low complexity" evidence="5">
    <location>
        <begin position="62"/>
        <end position="83"/>
    </location>
</feature>
<feature type="compositionally biased region" description="Polar residues" evidence="5">
    <location>
        <begin position="84"/>
        <end position="94"/>
    </location>
</feature>
<feature type="compositionally biased region" description="Low complexity" evidence="5">
    <location>
        <begin position="95"/>
        <end position="111"/>
    </location>
</feature>
<feature type="compositionally biased region" description="Low complexity" evidence="5">
    <location>
        <begin position="120"/>
        <end position="166"/>
    </location>
</feature>
<feature type="compositionally biased region" description="Polar residues" evidence="5">
    <location>
        <begin position="167"/>
        <end position="177"/>
    </location>
</feature>
<feature type="compositionally biased region" description="Low complexity" evidence="5">
    <location>
        <begin position="178"/>
        <end position="241"/>
    </location>
</feature>
<feature type="compositionally biased region" description="Low complexity" evidence="5">
    <location>
        <begin position="254"/>
        <end position="267"/>
    </location>
</feature>
<feature type="compositionally biased region" description="Polar residues" evidence="5">
    <location>
        <begin position="282"/>
        <end position="294"/>
    </location>
</feature>
<feature type="compositionally biased region" description="Low complexity" evidence="5">
    <location>
        <begin position="300"/>
        <end position="314"/>
    </location>
</feature>
<feature type="compositionally biased region" description="Low complexity" evidence="5">
    <location>
        <begin position="324"/>
        <end position="337"/>
    </location>
</feature>
<feature type="active site" description="Proton acceptor" evidence="1 3 4">
    <location>
        <position position="558"/>
    </location>
</feature>
<feature type="binding site" evidence="1 3">
    <location>
        <begin position="444"/>
        <end position="452"/>
    </location>
    <ligand>
        <name>ATP</name>
        <dbReference type="ChEBI" id="CHEBI:30616"/>
    </ligand>
</feature>
<feature type="binding site" evidence="1 3">
    <location>
        <position position="467"/>
    </location>
    <ligand>
        <name>ATP</name>
        <dbReference type="ChEBI" id="CHEBI:30616"/>
    </ligand>
</feature>
<organism>
    <name type="scientific">Dictyostelium discoideum</name>
    <name type="common">Social amoeba</name>
    <dbReference type="NCBI Taxonomy" id="44689"/>
    <lineage>
        <taxon>Eukaryota</taxon>
        <taxon>Amoebozoa</taxon>
        <taxon>Evosea</taxon>
        <taxon>Eumycetozoa</taxon>
        <taxon>Dictyostelia</taxon>
        <taxon>Dictyosteliales</taxon>
        <taxon>Dictyosteliaceae</taxon>
        <taxon>Dictyostelium</taxon>
    </lineage>
</organism>
<comment type="catalytic activity">
    <reaction evidence="2">
        <text>L-seryl-[protein] + ATP = O-phospho-L-seryl-[protein] + ADP + H(+)</text>
        <dbReference type="Rhea" id="RHEA:17989"/>
        <dbReference type="Rhea" id="RHEA-COMP:9863"/>
        <dbReference type="Rhea" id="RHEA-COMP:11604"/>
        <dbReference type="ChEBI" id="CHEBI:15378"/>
        <dbReference type="ChEBI" id="CHEBI:29999"/>
        <dbReference type="ChEBI" id="CHEBI:30616"/>
        <dbReference type="ChEBI" id="CHEBI:83421"/>
        <dbReference type="ChEBI" id="CHEBI:456216"/>
        <dbReference type="EC" id="2.7.11.1"/>
    </reaction>
</comment>
<comment type="catalytic activity">
    <reaction evidence="2">
        <text>L-threonyl-[protein] + ATP = O-phospho-L-threonyl-[protein] + ADP + H(+)</text>
        <dbReference type="Rhea" id="RHEA:46608"/>
        <dbReference type="Rhea" id="RHEA-COMP:11060"/>
        <dbReference type="Rhea" id="RHEA-COMP:11605"/>
        <dbReference type="ChEBI" id="CHEBI:15378"/>
        <dbReference type="ChEBI" id="CHEBI:30013"/>
        <dbReference type="ChEBI" id="CHEBI:30616"/>
        <dbReference type="ChEBI" id="CHEBI:61977"/>
        <dbReference type="ChEBI" id="CHEBI:456216"/>
        <dbReference type="EC" id="2.7.11.1"/>
    </reaction>
</comment>
<comment type="cofactor">
    <cofactor evidence="2">
        <name>Mg(2+)</name>
        <dbReference type="ChEBI" id="CHEBI:18420"/>
    </cofactor>
</comment>
<comment type="tissue specificity">
    <text evidence="6">Expressed at equal levels in prestalk and prespore cells.</text>
</comment>
<comment type="similarity">
    <text evidence="7">Belongs to the protein kinase superfamily. STE Ser/Thr protein kinase family. STE20 subfamily.</text>
</comment>